<keyword id="KW-0378">Hydrolase</keyword>
<proteinExistence type="inferred from homology"/>
<protein>
    <recommendedName>
        <fullName>Acylphosphatase</fullName>
        <ecNumber>3.6.1.7</ecNumber>
    </recommendedName>
    <alternativeName>
        <fullName>Acylphosphate phosphohydrolase</fullName>
    </alternativeName>
</protein>
<sequence>MMDMARAHVFISGRVQGVNFRASARNYAREVGVSGWVRNLEDGRVEAVFEGERSAVQKMVSWCYSGPSHARVEAVDVRWEKPTGEERGFSIIW</sequence>
<dbReference type="EC" id="3.6.1.7"/>
<dbReference type="EMBL" id="CP000686">
    <property type="protein sequence ID" value="ABQ88743.1"/>
    <property type="molecule type" value="Genomic_DNA"/>
</dbReference>
<dbReference type="SMR" id="A5UQ40"/>
<dbReference type="STRING" id="357808.RoseRS_0311"/>
<dbReference type="KEGG" id="rrs:RoseRS_0311"/>
<dbReference type="eggNOG" id="COG1254">
    <property type="taxonomic scope" value="Bacteria"/>
</dbReference>
<dbReference type="HOGENOM" id="CLU_141932_3_2_0"/>
<dbReference type="OrthoDB" id="9808093at2"/>
<dbReference type="Proteomes" id="UP000006554">
    <property type="component" value="Chromosome"/>
</dbReference>
<dbReference type="GO" id="GO:0003998">
    <property type="term" value="F:acylphosphatase activity"/>
    <property type="evidence" value="ECO:0007669"/>
    <property type="project" value="UniProtKB-EC"/>
</dbReference>
<dbReference type="FunFam" id="3.30.70.100:FF:000012">
    <property type="entry name" value="Acylphosphatase"/>
    <property type="match status" value="1"/>
</dbReference>
<dbReference type="Gene3D" id="3.30.70.100">
    <property type="match status" value="1"/>
</dbReference>
<dbReference type="InterPro" id="IPR020456">
    <property type="entry name" value="Acylphosphatase"/>
</dbReference>
<dbReference type="InterPro" id="IPR001792">
    <property type="entry name" value="Acylphosphatase-like_dom"/>
</dbReference>
<dbReference type="InterPro" id="IPR036046">
    <property type="entry name" value="Acylphosphatase-like_dom_sf"/>
</dbReference>
<dbReference type="InterPro" id="IPR017968">
    <property type="entry name" value="Acylphosphatase_CS"/>
</dbReference>
<dbReference type="NCBIfam" id="NF011016">
    <property type="entry name" value="PRK14444.1"/>
    <property type="match status" value="1"/>
</dbReference>
<dbReference type="PANTHER" id="PTHR47268">
    <property type="entry name" value="ACYLPHOSPHATASE"/>
    <property type="match status" value="1"/>
</dbReference>
<dbReference type="PANTHER" id="PTHR47268:SF4">
    <property type="entry name" value="ACYLPHOSPHATASE"/>
    <property type="match status" value="1"/>
</dbReference>
<dbReference type="Pfam" id="PF00708">
    <property type="entry name" value="Acylphosphatase"/>
    <property type="match status" value="1"/>
</dbReference>
<dbReference type="PRINTS" id="PR00112">
    <property type="entry name" value="ACYLPHPHTASE"/>
</dbReference>
<dbReference type="SUPFAM" id="SSF54975">
    <property type="entry name" value="Acylphosphatase/BLUF domain-like"/>
    <property type="match status" value="1"/>
</dbReference>
<dbReference type="PROSITE" id="PS00150">
    <property type="entry name" value="ACYLPHOSPHATASE_1"/>
    <property type="match status" value="1"/>
</dbReference>
<dbReference type="PROSITE" id="PS00151">
    <property type="entry name" value="ACYLPHOSPHATASE_2"/>
    <property type="match status" value="1"/>
</dbReference>
<dbReference type="PROSITE" id="PS51160">
    <property type="entry name" value="ACYLPHOSPHATASE_3"/>
    <property type="match status" value="1"/>
</dbReference>
<comment type="catalytic activity">
    <reaction>
        <text>an acyl phosphate + H2O = a carboxylate + phosphate + H(+)</text>
        <dbReference type="Rhea" id="RHEA:14965"/>
        <dbReference type="ChEBI" id="CHEBI:15377"/>
        <dbReference type="ChEBI" id="CHEBI:15378"/>
        <dbReference type="ChEBI" id="CHEBI:29067"/>
        <dbReference type="ChEBI" id="CHEBI:43474"/>
        <dbReference type="ChEBI" id="CHEBI:59918"/>
        <dbReference type="EC" id="3.6.1.7"/>
    </reaction>
</comment>
<comment type="similarity">
    <text evidence="2">Belongs to the acylphosphatase family.</text>
</comment>
<evidence type="ECO:0000255" key="1">
    <source>
        <dbReference type="PROSITE-ProRule" id="PRU00520"/>
    </source>
</evidence>
<evidence type="ECO:0000305" key="2"/>
<gene>
    <name type="primary">acyP</name>
    <name type="ordered locus">RoseRS_0311</name>
</gene>
<accession>A5UQ40</accession>
<organism>
    <name type="scientific">Roseiflexus sp. (strain RS-1)</name>
    <dbReference type="NCBI Taxonomy" id="357808"/>
    <lineage>
        <taxon>Bacteria</taxon>
        <taxon>Bacillati</taxon>
        <taxon>Chloroflexota</taxon>
        <taxon>Chloroflexia</taxon>
        <taxon>Chloroflexales</taxon>
        <taxon>Roseiflexineae</taxon>
        <taxon>Roseiflexaceae</taxon>
        <taxon>Roseiflexus</taxon>
    </lineage>
</organism>
<name>ACYP_ROSS1</name>
<feature type="chain" id="PRO_0000326790" description="Acylphosphatase">
    <location>
        <begin position="1"/>
        <end position="93"/>
    </location>
</feature>
<feature type="domain" description="Acylphosphatase-like" evidence="1">
    <location>
        <begin position="6"/>
        <end position="93"/>
    </location>
</feature>
<feature type="active site" evidence="1">
    <location>
        <position position="21"/>
    </location>
</feature>
<feature type="active site" evidence="1">
    <location>
        <position position="39"/>
    </location>
</feature>
<reference key="1">
    <citation type="submission" date="2007-04" db="EMBL/GenBank/DDBJ databases">
        <title>Complete sequence of Roseiflexus sp. RS-1.</title>
        <authorList>
            <consortium name="US DOE Joint Genome Institute"/>
            <person name="Copeland A."/>
            <person name="Lucas S."/>
            <person name="Lapidus A."/>
            <person name="Barry K."/>
            <person name="Detter J.C."/>
            <person name="Glavina del Rio T."/>
            <person name="Hammon N."/>
            <person name="Israni S."/>
            <person name="Dalin E."/>
            <person name="Tice H."/>
            <person name="Pitluck S."/>
            <person name="Chertkov O."/>
            <person name="Brettin T."/>
            <person name="Bruce D."/>
            <person name="Han C."/>
            <person name="Schmutz J."/>
            <person name="Larimer F."/>
            <person name="Land M."/>
            <person name="Hauser L."/>
            <person name="Kyrpides N."/>
            <person name="Mikhailova N."/>
            <person name="Bryant D.A."/>
            <person name="Richardson P."/>
        </authorList>
    </citation>
    <scope>NUCLEOTIDE SEQUENCE [LARGE SCALE GENOMIC DNA]</scope>
    <source>
        <strain>RS-1</strain>
    </source>
</reference>